<evidence type="ECO:0000255" key="1">
    <source>
        <dbReference type="HAMAP-Rule" id="MF_01602"/>
    </source>
</evidence>
<evidence type="ECO:0000255" key="2">
    <source>
        <dbReference type="PROSITE-ProRule" id="PRU01067"/>
    </source>
</evidence>
<name>LPLA_PECCP</name>
<proteinExistence type="inferred from homology"/>
<reference key="1">
    <citation type="submission" date="2009-07" db="EMBL/GenBank/DDBJ databases">
        <title>Complete sequence of Pectobacterium carotovorum subsp. carotovorum PC1.</title>
        <authorList>
            <consortium name="US DOE Joint Genome Institute"/>
            <person name="Lucas S."/>
            <person name="Copeland A."/>
            <person name="Lapidus A."/>
            <person name="Glavina del Rio T."/>
            <person name="Tice H."/>
            <person name="Bruce D."/>
            <person name="Goodwin L."/>
            <person name="Pitluck S."/>
            <person name="Munk A.C."/>
            <person name="Brettin T."/>
            <person name="Detter J.C."/>
            <person name="Han C."/>
            <person name="Tapia R."/>
            <person name="Larimer F."/>
            <person name="Land M."/>
            <person name="Hauser L."/>
            <person name="Kyrpides N."/>
            <person name="Mikhailova N."/>
            <person name="Balakrishnan V."/>
            <person name="Glasner J."/>
            <person name="Perna N.T."/>
        </authorList>
    </citation>
    <scope>NUCLEOTIDE SEQUENCE [LARGE SCALE GENOMIC DNA]</scope>
    <source>
        <strain>PC1</strain>
    </source>
</reference>
<protein>
    <recommendedName>
        <fullName evidence="1">Lipoate-protein ligase A</fullName>
        <ecNumber evidence="1">6.3.1.20</ecNumber>
    </recommendedName>
    <alternativeName>
        <fullName evidence="1">Lipoate--protein ligase</fullName>
    </alternativeName>
</protein>
<gene>
    <name evidence="1" type="primary">lplA</name>
    <name type="ordered locus">PC1_2465</name>
</gene>
<sequence length="338" mass="37858">MSSLRLLISDSYDPWFNLAVEECIFRQMPTTQRVLFLWRNAETVVIGRAQNPWKECNTRRMEEDGIKLARRSSGGGAVFHDLGNTCFTFMAGKPEYDKSVSTQIVLDALSALGLKASASGRNDLVVETADGVRKVSGSAYRETKDRGFHHGTLLLNADLNRLADYLNPDIKKLQAKGITSVRSRVANLVELLPSVDHQVICQAVTQAFFDYFGEQCEPEIISPSAYPDLPGFSEQFARQSSWEWNFGQAPDFSHLLDNRFTWGGIELHFDVERGVIIRAQVYTDSLNPAPLEALACALQGTAYRPENMAATCQALITAFPEQQNELQELAEWLEQSLR</sequence>
<accession>C6DKP5</accession>
<comment type="function">
    <text evidence="1">Catalyzes both the ATP-dependent activation of exogenously supplied lipoate to lipoyl-AMP and the transfer of the activated lipoyl onto the lipoyl domains of lipoate-dependent enzymes.</text>
</comment>
<comment type="catalytic activity">
    <reaction evidence="1">
        <text>L-lysyl-[lipoyl-carrier protein] + (R)-lipoate + ATP = N(6)-[(R)-lipoyl]-L-lysyl-[lipoyl-carrier protein] + AMP + diphosphate + H(+)</text>
        <dbReference type="Rhea" id="RHEA:49288"/>
        <dbReference type="Rhea" id="RHEA-COMP:10500"/>
        <dbReference type="Rhea" id="RHEA-COMP:10502"/>
        <dbReference type="ChEBI" id="CHEBI:15378"/>
        <dbReference type="ChEBI" id="CHEBI:29969"/>
        <dbReference type="ChEBI" id="CHEBI:30616"/>
        <dbReference type="ChEBI" id="CHEBI:33019"/>
        <dbReference type="ChEBI" id="CHEBI:83088"/>
        <dbReference type="ChEBI" id="CHEBI:83099"/>
        <dbReference type="ChEBI" id="CHEBI:456215"/>
        <dbReference type="EC" id="6.3.1.20"/>
    </reaction>
</comment>
<comment type="pathway">
    <text evidence="1">Protein modification; protein lipoylation via exogenous pathway; protein N(6)-(lipoyl)lysine from lipoate: step 1/2.</text>
</comment>
<comment type="pathway">
    <text evidence="1">Protein modification; protein lipoylation via exogenous pathway; protein N(6)-(lipoyl)lysine from lipoate: step 2/2.</text>
</comment>
<comment type="subunit">
    <text evidence="1">Monomer.</text>
</comment>
<comment type="subcellular location">
    <subcellularLocation>
        <location evidence="1">Cytoplasm</location>
    </subcellularLocation>
</comment>
<comment type="miscellaneous">
    <text evidence="1">In the transfer reaction, the free carboxyl group of lipoic acid is attached via an amide linkage to the epsilon-amino group of a specific lysine residue of lipoyl domains of lipoate-dependent enzymes.</text>
</comment>
<comment type="similarity">
    <text evidence="1">Belongs to the LplA family.</text>
</comment>
<dbReference type="EC" id="6.3.1.20" evidence="1"/>
<dbReference type="EMBL" id="CP001657">
    <property type="protein sequence ID" value="ACT13496.1"/>
    <property type="molecule type" value="Genomic_DNA"/>
</dbReference>
<dbReference type="RefSeq" id="WP_015840676.1">
    <property type="nucleotide sequence ID" value="NC_012917.1"/>
</dbReference>
<dbReference type="SMR" id="C6DKP5"/>
<dbReference type="STRING" id="561230.PC1_2465"/>
<dbReference type="KEGG" id="pct:PC1_2465"/>
<dbReference type="eggNOG" id="COG0095">
    <property type="taxonomic scope" value="Bacteria"/>
</dbReference>
<dbReference type="HOGENOM" id="CLU_022986_0_1_6"/>
<dbReference type="OrthoDB" id="9787898at2"/>
<dbReference type="UniPathway" id="UPA00537">
    <property type="reaction ID" value="UER00594"/>
</dbReference>
<dbReference type="UniPathway" id="UPA00537">
    <property type="reaction ID" value="UER00595"/>
</dbReference>
<dbReference type="Proteomes" id="UP000002736">
    <property type="component" value="Chromosome"/>
</dbReference>
<dbReference type="GO" id="GO:0005829">
    <property type="term" value="C:cytosol"/>
    <property type="evidence" value="ECO:0007669"/>
    <property type="project" value="TreeGrafter"/>
</dbReference>
<dbReference type="GO" id="GO:0005524">
    <property type="term" value="F:ATP binding"/>
    <property type="evidence" value="ECO:0007669"/>
    <property type="project" value="UniProtKB-KW"/>
</dbReference>
<dbReference type="GO" id="GO:0016979">
    <property type="term" value="F:lipoate-protein ligase activity"/>
    <property type="evidence" value="ECO:0007669"/>
    <property type="project" value="UniProtKB-UniRule"/>
</dbReference>
<dbReference type="GO" id="GO:0017118">
    <property type="term" value="F:lipoyltransferase activity"/>
    <property type="evidence" value="ECO:0007669"/>
    <property type="project" value="TreeGrafter"/>
</dbReference>
<dbReference type="GO" id="GO:0036211">
    <property type="term" value="P:protein modification process"/>
    <property type="evidence" value="ECO:0007669"/>
    <property type="project" value="InterPro"/>
</dbReference>
<dbReference type="CDD" id="cd16443">
    <property type="entry name" value="LplA"/>
    <property type="match status" value="1"/>
</dbReference>
<dbReference type="FunFam" id="3.30.930.10:FF:000024">
    <property type="entry name" value="Lipoate-protein ligase A"/>
    <property type="match status" value="1"/>
</dbReference>
<dbReference type="Gene3D" id="3.30.930.10">
    <property type="entry name" value="Bira Bifunctional Protein, Domain 2"/>
    <property type="match status" value="1"/>
</dbReference>
<dbReference type="Gene3D" id="3.30.390.50">
    <property type="entry name" value="CO dehydrogenase flavoprotein, C-terminal domain"/>
    <property type="match status" value="1"/>
</dbReference>
<dbReference type="HAMAP" id="MF_01602">
    <property type="entry name" value="LplA"/>
    <property type="match status" value="1"/>
</dbReference>
<dbReference type="InterPro" id="IPR045864">
    <property type="entry name" value="aa-tRNA-synth_II/BPL/LPL"/>
</dbReference>
<dbReference type="InterPro" id="IPR004143">
    <property type="entry name" value="BPL_LPL_catalytic"/>
</dbReference>
<dbReference type="InterPro" id="IPR023741">
    <property type="entry name" value="Lipoate_ligase_A"/>
</dbReference>
<dbReference type="InterPro" id="IPR019491">
    <property type="entry name" value="Lipoate_protein_ligase_C"/>
</dbReference>
<dbReference type="InterPro" id="IPR004562">
    <property type="entry name" value="LipoylTrfase_LipoateP_Ligase"/>
</dbReference>
<dbReference type="NCBIfam" id="TIGR00545">
    <property type="entry name" value="lipoyltrans"/>
    <property type="match status" value="1"/>
</dbReference>
<dbReference type="PANTHER" id="PTHR12561">
    <property type="entry name" value="LIPOATE-PROTEIN LIGASE"/>
    <property type="match status" value="1"/>
</dbReference>
<dbReference type="PANTHER" id="PTHR12561:SF3">
    <property type="entry name" value="LIPOYLTRANSFERASE 1, MITOCHONDRIAL"/>
    <property type="match status" value="1"/>
</dbReference>
<dbReference type="Pfam" id="PF10437">
    <property type="entry name" value="Lip_prot_lig_C"/>
    <property type="match status" value="1"/>
</dbReference>
<dbReference type="Pfam" id="PF21948">
    <property type="entry name" value="LplA-B_cat"/>
    <property type="match status" value="1"/>
</dbReference>
<dbReference type="SUPFAM" id="SSF55681">
    <property type="entry name" value="Class II aaRS and biotin synthetases"/>
    <property type="match status" value="1"/>
</dbReference>
<dbReference type="SUPFAM" id="SSF82649">
    <property type="entry name" value="SufE/NifU"/>
    <property type="match status" value="1"/>
</dbReference>
<dbReference type="PROSITE" id="PS51733">
    <property type="entry name" value="BPL_LPL_CATALYTIC"/>
    <property type="match status" value="1"/>
</dbReference>
<feature type="chain" id="PRO_1000215690" description="Lipoate-protein ligase A">
    <location>
        <begin position="1"/>
        <end position="338"/>
    </location>
</feature>
<feature type="domain" description="BPL/LPL catalytic" evidence="2">
    <location>
        <begin position="29"/>
        <end position="216"/>
    </location>
</feature>
<feature type="binding site" evidence="1">
    <location>
        <position position="71"/>
    </location>
    <ligand>
        <name>ATP</name>
        <dbReference type="ChEBI" id="CHEBI:30616"/>
    </ligand>
</feature>
<feature type="binding site" evidence="1">
    <location>
        <begin position="76"/>
        <end position="79"/>
    </location>
    <ligand>
        <name>ATP</name>
        <dbReference type="ChEBI" id="CHEBI:30616"/>
    </ligand>
</feature>
<feature type="binding site" evidence="1">
    <location>
        <position position="134"/>
    </location>
    <ligand>
        <name>(R)-lipoate</name>
        <dbReference type="ChEBI" id="CHEBI:83088"/>
    </ligand>
</feature>
<feature type="binding site" evidence="1">
    <location>
        <position position="134"/>
    </location>
    <ligand>
        <name>ATP</name>
        <dbReference type="ChEBI" id="CHEBI:30616"/>
    </ligand>
</feature>
<keyword id="KW-0067">ATP-binding</keyword>
<keyword id="KW-0963">Cytoplasm</keyword>
<keyword id="KW-0436">Ligase</keyword>
<keyword id="KW-0547">Nucleotide-binding</keyword>
<organism>
    <name type="scientific">Pectobacterium carotovorum subsp. carotovorum (strain PC1)</name>
    <dbReference type="NCBI Taxonomy" id="561230"/>
    <lineage>
        <taxon>Bacteria</taxon>
        <taxon>Pseudomonadati</taxon>
        <taxon>Pseudomonadota</taxon>
        <taxon>Gammaproteobacteria</taxon>
        <taxon>Enterobacterales</taxon>
        <taxon>Pectobacteriaceae</taxon>
        <taxon>Pectobacterium</taxon>
    </lineage>
</organism>